<reference key="1">
    <citation type="journal article" date="2000" name="Nature">
        <title>DNA sequence of both chromosomes of the cholera pathogen Vibrio cholerae.</title>
        <authorList>
            <person name="Heidelberg J.F."/>
            <person name="Eisen J.A."/>
            <person name="Nelson W.C."/>
            <person name="Clayton R.A."/>
            <person name="Gwinn M.L."/>
            <person name="Dodson R.J."/>
            <person name="Haft D.H."/>
            <person name="Hickey E.K."/>
            <person name="Peterson J.D."/>
            <person name="Umayam L.A."/>
            <person name="Gill S.R."/>
            <person name="Nelson K.E."/>
            <person name="Read T.D."/>
            <person name="Tettelin H."/>
            <person name="Richardson D.L."/>
            <person name="Ermolaeva M.D."/>
            <person name="Vamathevan J.J."/>
            <person name="Bass S."/>
            <person name="Qin H."/>
            <person name="Dragoi I."/>
            <person name="Sellers P."/>
            <person name="McDonald L.A."/>
            <person name="Utterback T.R."/>
            <person name="Fleischmann R.D."/>
            <person name="Nierman W.C."/>
            <person name="White O."/>
            <person name="Salzberg S.L."/>
            <person name="Smith H.O."/>
            <person name="Colwell R.R."/>
            <person name="Mekalanos J.J."/>
            <person name="Venter J.C."/>
            <person name="Fraser C.M."/>
        </authorList>
    </citation>
    <scope>NUCLEOTIDE SEQUENCE [LARGE SCALE GENOMIC DNA]</scope>
    <source>
        <strain>ATCC 39315 / El Tor Inaba N16961</strain>
    </source>
</reference>
<comment type="catalytic activity">
    <reaction>
        <text>(6R)-L-erythro-5,6,7,8-tetrahydrobiopterin + L-phenylalanine + O2 = (4aS,6R)-4a-hydroxy-L-erythro-5,6,7,8-tetrahydrobiopterin + L-tyrosine</text>
        <dbReference type="Rhea" id="RHEA:20273"/>
        <dbReference type="ChEBI" id="CHEBI:15379"/>
        <dbReference type="ChEBI" id="CHEBI:15642"/>
        <dbReference type="ChEBI" id="CHEBI:58095"/>
        <dbReference type="ChEBI" id="CHEBI:58315"/>
        <dbReference type="ChEBI" id="CHEBI:59560"/>
        <dbReference type="EC" id="1.14.16.1"/>
    </reaction>
</comment>
<comment type="cofactor">
    <cofactor evidence="1">
        <name>Fe(2+)</name>
        <dbReference type="ChEBI" id="CHEBI:29033"/>
    </cofactor>
    <text evidence="1">Binds 1 Fe(2+) ion.</text>
</comment>
<comment type="pathway">
    <text>Amino-acid degradation; L-phenylalanine degradation; acetoacetate and fumarate from L-phenylalanine: step 1/6.</text>
</comment>
<comment type="similarity">
    <text evidence="3">Belongs to the biopterin-dependent aromatic amino acid hydroxylase family.</text>
</comment>
<feature type="chain" id="PRO_0000205558" description="Phenylalanine-4-hydroxylase">
    <location>
        <begin position="1"/>
        <end position="289"/>
    </location>
</feature>
<feature type="binding site" evidence="2">
    <location>
        <position position="144"/>
    </location>
    <ligand>
        <name>Fe cation</name>
        <dbReference type="ChEBI" id="CHEBI:24875"/>
    </ligand>
</feature>
<feature type="binding site" evidence="2">
    <location>
        <position position="149"/>
    </location>
    <ligand>
        <name>Fe cation</name>
        <dbReference type="ChEBI" id="CHEBI:24875"/>
    </ligand>
</feature>
<feature type="binding site" evidence="2">
    <location>
        <position position="189"/>
    </location>
    <ligand>
        <name>Fe cation</name>
        <dbReference type="ChEBI" id="CHEBI:24875"/>
    </ligand>
</feature>
<keyword id="KW-0408">Iron</keyword>
<keyword id="KW-0479">Metal-binding</keyword>
<keyword id="KW-0503">Monooxygenase</keyword>
<keyword id="KW-0560">Oxidoreductase</keyword>
<keyword id="KW-0585">Phenylalanine catabolism</keyword>
<keyword id="KW-1185">Reference proteome</keyword>
<sequence length="289" mass="33445">MSKIPLAVRIGLGRLNVTNLLRSRAMTQYHSKPVSEHGHIDWDQDEHAVWHELITRQQEVVKTRACQAYLDGLNMLNLPTDRLPQLPEINRVLQRETGWQVEPVPALISFDRFFALLADKKFPVATFLRRREEFDYLQEPDFFHEVYGHCAMLTHPDFAAFTHVYGQLGAKATPKERSYLARLYWFTVEFGLVQEQGQTKIYGGGILSSPGETLYASESTIPKREPFDIMQVLRTPYRIDIMQPIYYVLPDLSQLYQLSQRDVMALVWQAMQDGLLPPLFQPKEQQHAG</sequence>
<gene>
    <name type="primary">phhA</name>
    <name type="ordered locus">VC_A0828</name>
</gene>
<protein>
    <recommendedName>
        <fullName>Phenylalanine-4-hydroxylase</fullName>
        <shortName>PAH</shortName>
        <ecNumber>1.14.16.1</ecNumber>
    </recommendedName>
    <alternativeName>
        <fullName>Phe-4-monooxygenase</fullName>
    </alternativeName>
</protein>
<dbReference type="EC" id="1.14.16.1"/>
<dbReference type="EMBL" id="AE003853">
    <property type="protein sequence ID" value="AAF96726.1"/>
    <property type="molecule type" value="Genomic_DNA"/>
</dbReference>
<dbReference type="PIR" id="D82413">
    <property type="entry name" value="D82413"/>
</dbReference>
<dbReference type="SMR" id="Q9KLB8"/>
<dbReference type="STRING" id="243277.VC_A0828"/>
<dbReference type="DNASU" id="2612712"/>
<dbReference type="EnsemblBacteria" id="AAF96726">
    <property type="protein sequence ID" value="AAF96726"/>
    <property type="gene ID" value="VC_A0828"/>
</dbReference>
<dbReference type="KEGG" id="vch:VC_A0828"/>
<dbReference type="eggNOG" id="COG3186">
    <property type="taxonomic scope" value="Bacteria"/>
</dbReference>
<dbReference type="HOGENOM" id="CLU_023198_1_1_6"/>
<dbReference type="UniPathway" id="UPA00139">
    <property type="reaction ID" value="UER00337"/>
</dbReference>
<dbReference type="Proteomes" id="UP000000584">
    <property type="component" value="Chromosome 2"/>
</dbReference>
<dbReference type="GO" id="GO:0005506">
    <property type="term" value="F:iron ion binding"/>
    <property type="evidence" value="ECO:0007669"/>
    <property type="project" value="InterPro"/>
</dbReference>
<dbReference type="GO" id="GO:0004505">
    <property type="term" value="F:phenylalanine 4-monooxygenase activity"/>
    <property type="evidence" value="ECO:0007669"/>
    <property type="project" value="UniProtKB-EC"/>
</dbReference>
<dbReference type="GO" id="GO:0006559">
    <property type="term" value="P:L-phenylalanine catabolic process"/>
    <property type="evidence" value="ECO:0007669"/>
    <property type="project" value="UniProtKB-UniPathway"/>
</dbReference>
<dbReference type="CDD" id="cd03348">
    <property type="entry name" value="pro_PheOH"/>
    <property type="match status" value="1"/>
</dbReference>
<dbReference type="Gene3D" id="1.10.800.10">
    <property type="entry name" value="Aromatic amino acid hydroxylase"/>
    <property type="match status" value="1"/>
</dbReference>
<dbReference type="InterPro" id="IPR001273">
    <property type="entry name" value="ArAA_hydroxylase"/>
</dbReference>
<dbReference type="InterPro" id="IPR018301">
    <property type="entry name" value="ArAA_hydroxylase_Fe/CU_BS"/>
</dbReference>
<dbReference type="InterPro" id="IPR036951">
    <property type="entry name" value="ArAA_hydroxylase_sf"/>
</dbReference>
<dbReference type="InterPro" id="IPR036329">
    <property type="entry name" value="Aro-AA_hydroxylase_C_sf"/>
</dbReference>
<dbReference type="InterPro" id="IPR019774">
    <property type="entry name" value="Aromatic-AA_hydroxylase_C"/>
</dbReference>
<dbReference type="InterPro" id="IPR005960">
    <property type="entry name" value="Phe-4-hydroxylase_mono"/>
</dbReference>
<dbReference type="NCBIfam" id="TIGR01267">
    <property type="entry name" value="Phe4hydrox_mono"/>
    <property type="match status" value="1"/>
</dbReference>
<dbReference type="NCBIfam" id="NF008877">
    <property type="entry name" value="PRK11913.1-2"/>
    <property type="match status" value="1"/>
</dbReference>
<dbReference type="PANTHER" id="PTHR11473">
    <property type="entry name" value="AROMATIC AMINO ACID HYDROXYLASE"/>
    <property type="match status" value="1"/>
</dbReference>
<dbReference type="PANTHER" id="PTHR11473:SF24">
    <property type="entry name" value="PHENYLALANINE-4-HYDROXYLASE"/>
    <property type="match status" value="1"/>
</dbReference>
<dbReference type="Pfam" id="PF00351">
    <property type="entry name" value="Biopterin_H"/>
    <property type="match status" value="1"/>
</dbReference>
<dbReference type="PRINTS" id="PR00372">
    <property type="entry name" value="FYWHYDRXLASE"/>
</dbReference>
<dbReference type="SUPFAM" id="SSF56534">
    <property type="entry name" value="Aromatic aminoacid monoxygenases, catalytic and oligomerization domains"/>
    <property type="match status" value="1"/>
</dbReference>
<dbReference type="PROSITE" id="PS00367">
    <property type="entry name" value="BH4_AAA_HYDROXYL_1"/>
    <property type="match status" value="1"/>
</dbReference>
<dbReference type="PROSITE" id="PS51410">
    <property type="entry name" value="BH4_AAA_HYDROXYL_2"/>
    <property type="match status" value="1"/>
</dbReference>
<organism>
    <name type="scientific">Vibrio cholerae serotype O1 (strain ATCC 39315 / El Tor Inaba N16961)</name>
    <dbReference type="NCBI Taxonomy" id="243277"/>
    <lineage>
        <taxon>Bacteria</taxon>
        <taxon>Pseudomonadati</taxon>
        <taxon>Pseudomonadota</taxon>
        <taxon>Gammaproteobacteria</taxon>
        <taxon>Vibrionales</taxon>
        <taxon>Vibrionaceae</taxon>
        <taxon>Vibrio</taxon>
    </lineage>
</organism>
<name>PH4H_VIBCH</name>
<accession>Q9KLB8</accession>
<evidence type="ECO:0000250" key="1"/>
<evidence type="ECO:0000255" key="2"/>
<evidence type="ECO:0000305" key="3"/>
<proteinExistence type="inferred from homology"/>